<dbReference type="EMBL" id="X07805">
    <property type="protein sequence ID" value="CAA30661.1"/>
    <property type="molecule type" value="Genomic_DNA"/>
</dbReference>
<dbReference type="GO" id="GO:0044196">
    <property type="term" value="C:host cell nucleolus"/>
    <property type="evidence" value="ECO:0007669"/>
    <property type="project" value="UniProtKB-SubCell"/>
</dbReference>
<dbReference type="GO" id="GO:0003723">
    <property type="term" value="F:RNA binding"/>
    <property type="evidence" value="ECO:0007669"/>
    <property type="project" value="UniProtKB-KW"/>
</dbReference>
<dbReference type="GO" id="GO:0001070">
    <property type="term" value="F:RNA-binding transcription regulator activity"/>
    <property type="evidence" value="ECO:0007669"/>
    <property type="project" value="InterPro"/>
</dbReference>
<dbReference type="GO" id="GO:0050434">
    <property type="term" value="P:positive regulation of viral transcription"/>
    <property type="evidence" value="ECO:0007669"/>
    <property type="project" value="InterPro"/>
</dbReference>
<dbReference type="Gene3D" id="4.10.20.10">
    <property type="entry name" value="Tat domain"/>
    <property type="match status" value="1"/>
</dbReference>
<dbReference type="InterPro" id="IPR001831">
    <property type="entry name" value="IV_Tat"/>
</dbReference>
<dbReference type="InterPro" id="IPR036963">
    <property type="entry name" value="Tat_dom_sf"/>
</dbReference>
<dbReference type="Pfam" id="PF00539">
    <property type="entry name" value="Tat"/>
    <property type="match status" value="1"/>
</dbReference>
<dbReference type="PRINTS" id="PR00055">
    <property type="entry name" value="HIVTATDOMAIN"/>
</dbReference>
<reference key="1">
    <citation type="journal article" date="1988" name="Nature">
        <title>Sequence of simian immunodeficiency virus from African green monkey, a new member of the HIV/SIV group.</title>
        <authorList>
            <person name="Fukasawa M."/>
            <person name="Miura T."/>
            <person name="Hasegawa A."/>
            <person name="Morikawa S."/>
            <person name="Tsujimoto H."/>
            <person name="Miki K."/>
            <person name="Kitamura T."/>
            <person name="Hayami M."/>
        </authorList>
    </citation>
    <scope>NUCLEOTIDE SEQUENCE [GENOMIC DNA]</scope>
</reference>
<name>TAT_SIVVT</name>
<organismHost>
    <name type="scientific">Cercopithecidae</name>
    <name type="common">Old World monkeys</name>
    <dbReference type="NCBI Taxonomy" id="9527"/>
</organismHost>
<proteinExistence type="inferred from homology"/>
<protein>
    <recommendedName>
        <fullName>Protein Tat</fullName>
    </recommendedName>
    <alternativeName>
        <fullName>Transactivating regulatory protein</fullName>
    </alternativeName>
</protein>
<comment type="function">
    <text evidence="2">Transcriptional activator that increases RNA Pol II processivity, thereby increasing the level of full-length viral transcripts. Recognizes a hairpin structure at the 5'-LTR of the nascent viral mRNAs referred to as the transactivation responsive RNA element (TAR) and recruits the cyclin T1-CDK9 complex (P-TEFb complex) that will in turn hyperphosphorylate the RNA polymerase II to allow efficient elongation. The CDK9 component of P-TEFb and other Tat-activated kinases hyperphosphorylate the C-terminus of RNA Pol II that becomes stabilized and much more processive.</text>
</comment>
<comment type="function">
    <text evidence="1">Extracellular circulating Tat can be endocytosed by surrounding uninfected cells via the binding to several surface receptors. Endosomal low pH allows Tat to cross the endosome membrane to enter the cytosol and eventually further translocate into the nucleus, thereby inducing severe cell dysfunctions ranging from cell activation to cell death. Through (By similarity).</text>
</comment>
<comment type="subunit">
    <text evidence="1">Interacts with host CCNT1. Associates with the P-TEFb complex composed at least of Tat, P-TEFb (CDK9 and CCNT1), TAR RNA, RNA Pol II. Interacts with CCNT2; the resulting complex is unable to bind to TAR RNA (By similarity).</text>
</comment>
<comment type="subcellular location">
    <subcellularLocation>
        <location evidence="1">Host nucleus</location>
        <location evidence="1">Host nucleolus</location>
    </subcellularLocation>
</comment>
<comment type="similarity">
    <text evidence="5">Belongs to the lentiviruses Tat family.</text>
</comment>
<evidence type="ECO:0000250" key="1"/>
<evidence type="ECO:0000250" key="2">
    <source>
        <dbReference type="UniProtKB" id="P04608"/>
    </source>
</evidence>
<evidence type="ECO:0000255" key="3"/>
<evidence type="ECO:0000256" key="4">
    <source>
        <dbReference type="SAM" id="MobiDB-lite"/>
    </source>
</evidence>
<evidence type="ECO:0000305" key="5"/>
<organism>
    <name type="scientific">Simian immunodeficiency virus agm.vervet (isolate AGM TYO-1)</name>
    <name type="common">SIV-agm.ver</name>
    <name type="synonym">Simian immunodeficiency virus African green monkey vervet</name>
    <dbReference type="NCBI Taxonomy" id="11731"/>
    <lineage>
        <taxon>Viruses</taxon>
        <taxon>Riboviria</taxon>
        <taxon>Pararnavirae</taxon>
        <taxon>Artverviricota</taxon>
        <taxon>Revtraviricetes</taxon>
        <taxon>Ortervirales</taxon>
        <taxon>Retroviridae</taxon>
        <taxon>Orthoretrovirinae</taxon>
        <taxon>Lentivirus</taxon>
        <taxon>Simian immunodeficiency virus</taxon>
    </lineage>
</organism>
<feature type="chain" id="PRO_0000085380" description="Protein Tat">
    <location>
        <begin position="1"/>
        <end position="100"/>
    </location>
</feature>
<feature type="region of interest" description="Cysteine-rich" evidence="1">
    <location>
        <begin position="26"/>
        <end position="42"/>
    </location>
</feature>
<feature type="region of interest" description="Core" evidence="1">
    <location>
        <begin position="43"/>
        <end position="53"/>
    </location>
</feature>
<feature type="region of interest" description="Disordered" evidence="4">
    <location>
        <begin position="76"/>
        <end position="100"/>
    </location>
</feature>
<feature type="short sequence motif" description="Nuclear localization signal, and RNA-binding (TAR)" evidence="3">
    <location>
        <begin position="54"/>
        <end position="60"/>
    </location>
</feature>
<gene>
    <name type="primary">tat</name>
</gene>
<accession>P05913</accession>
<keyword id="KW-0010">Activator</keyword>
<keyword id="KW-1048">Host nucleus</keyword>
<keyword id="KW-0945">Host-virus interaction</keyword>
<keyword id="KW-0694">RNA-binding</keyword>
<keyword id="KW-0804">Transcription</keyword>
<keyword id="KW-0805">Transcription regulation</keyword>
<sequence>MDKGEAEQIVSHQDLSEDYQKPLQTCKNKCFCKKCCYHCQLCFLQKGLGVTYHAPRTRRKKIRSLNLAPLQHQSISTKWGRDGQTTPTSQEKVETTAGSN</sequence>